<accession>A9KMB8</accession>
<dbReference type="EC" id="2.2.1.7" evidence="1"/>
<dbReference type="EMBL" id="CP000885">
    <property type="protein sequence ID" value="ABX42872.1"/>
    <property type="molecule type" value="Genomic_DNA"/>
</dbReference>
<dbReference type="RefSeq" id="WP_012200525.1">
    <property type="nucleotide sequence ID" value="NC_010001.1"/>
</dbReference>
<dbReference type="SMR" id="A9KMB8"/>
<dbReference type="STRING" id="357809.Cphy_2511"/>
<dbReference type="KEGG" id="cpy:Cphy_2511"/>
<dbReference type="eggNOG" id="COG1154">
    <property type="taxonomic scope" value="Bacteria"/>
</dbReference>
<dbReference type="HOGENOM" id="CLU_009227_1_4_9"/>
<dbReference type="OrthoDB" id="9803371at2"/>
<dbReference type="UniPathway" id="UPA00064">
    <property type="reaction ID" value="UER00091"/>
</dbReference>
<dbReference type="Proteomes" id="UP000000370">
    <property type="component" value="Chromosome"/>
</dbReference>
<dbReference type="GO" id="GO:0005829">
    <property type="term" value="C:cytosol"/>
    <property type="evidence" value="ECO:0007669"/>
    <property type="project" value="TreeGrafter"/>
</dbReference>
<dbReference type="GO" id="GO:0008661">
    <property type="term" value="F:1-deoxy-D-xylulose-5-phosphate synthase activity"/>
    <property type="evidence" value="ECO:0007669"/>
    <property type="project" value="UniProtKB-UniRule"/>
</dbReference>
<dbReference type="GO" id="GO:0000287">
    <property type="term" value="F:magnesium ion binding"/>
    <property type="evidence" value="ECO:0007669"/>
    <property type="project" value="UniProtKB-UniRule"/>
</dbReference>
<dbReference type="GO" id="GO:0030976">
    <property type="term" value="F:thiamine pyrophosphate binding"/>
    <property type="evidence" value="ECO:0007669"/>
    <property type="project" value="UniProtKB-UniRule"/>
</dbReference>
<dbReference type="GO" id="GO:0052865">
    <property type="term" value="P:1-deoxy-D-xylulose 5-phosphate biosynthetic process"/>
    <property type="evidence" value="ECO:0007669"/>
    <property type="project" value="UniProtKB-UniPathway"/>
</dbReference>
<dbReference type="GO" id="GO:0019288">
    <property type="term" value="P:isopentenyl diphosphate biosynthetic process, methylerythritol 4-phosphate pathway"/>
    <property type="evidence" value="ECO:0007669"/>
    <property type="project" value="TreeGrafter"/>
</dbReference>
<dbReference type="GO" id="GO:0016114">
    <property type="term" value="P:terpenoid biosynthetic process"/>
    <property type="evidence" value="ECO:0007669"/>
    <property type="project" value="UniProtKB-UniRule"/>
</dbReference>
<dbReference type="GO" id="GO:0009228">
    <property type="term" value="P:thiamine biosynthetic process"/>
    <property type="evidence" value="ECO:0007669"/>
    <property type="project" value="UniProtKB-UniRule"/>
</dbReference>
<dbReference type="CDD" id="cd02007">
    <property type="entry name" value="TPP_DXS"/>
    <property type="match status" value="1"/>
</dbReference>
<dbReference type="CDD" id="cd07033">
    <property type="entry name" value="TPP_PYR_DXS_TK_like"/>
    <property type="match status" value="1"/>
</dbReference>
<dbReference type="FunFam" id="3.40.50.920:FF:000002">
    <property type="entry name" value="1-deoxy-D-xylulose-5-phosphate synthase"/>
    <property type="match status" value="1"/>
</dbReference>
<dbReference type="FunFam" id="3.40.50.970:FF:000005">
    <property type="entry name" value="1-deoxy-D-xylulose-5-phosphate synthase"/>
    <property type="match status" value="1"/>
</dbReference>
<dbReference type="Gene3D" id="3.40.50.920">
    <property type="match status" value="1"/>
</dbReference>
<dbReference type="Gene3D" id="3.40.50.970">
    <property type="match status" value="2"/>
</dbReference>
<dbReference type="HAMAP" id="MF_00315">
    <property type="entry name" value="DXP_synth"/>
    <property type="match status" value="1"/>
</dbReference>
<dbReference type="InterPro" id="IPR005477">
    <property type="entry name" value="Dxylulose-5-P_synthase"/>
</dbReference>
<dbReference type="InterPro" id="IPR029061">
    <property type="entry name" value="THDP-binding"/>
</dbReference>
<dbReference type="InterPro" id="IPR009014">
    <property type="entry name" value="Transketo_C/PFOR_II"/>
</dbReference>
<dbReference type="InterPro" id="IPR005475">
    <property type="entry name" value="Transketolase-like_Pyr-bd"/>
</dbReference>
<dbReference type="InterPro" id="IPR020826">
    <property type="entry name" value="Transketolase_BS"/>
</dbReference>
<dbReference type="InterPro" id="IPR033248">
    <property type="entry name" value="Transketolase_C"/>
</dbReference>
<dbReference type="NCBIfam" id="TIGR00204">
    <property type="entry name" value="dxs"/>
    <property type="match status" value="1"/>
</dbReference>
<dbReference type="NCBIfam" id="NF003933">
    <property type="entry name" value="PRK05444.2-2"/>
    <property type="match status" value="1"/>
</dbReference>
<dbReference type="PANTHER" id="PTHR43322">
    <property type="entry name" value="1-D-DEOXYXYLULOSE 5-PHOSPHATE SYNTHASE-RELATED"/>
    <property type="match status" value="1"/>
</dbReference>
<dbReference type="PANTHER" id="PTHR43322:SF5">
    <property type="entry name" value="1-DEOXY-D-XYLULOSE-5-PHOSPHATE SYNTHASE, CHLOROPLASTIC"/>
    <property type="match status" value="1"/>
</dbReference>
<dbReference type="Pfam" id="PF13292">
    <property type="entry name" value="DXP_synthase_N"/>
    <property type="match status" value="1"/>
</dbReference>
<dbReference type="Pfam" id="PF02779">
    <property type="entry name" value="Transket_pyr"/>
    <property type="match status" value="1"/>
</dbReference>
<dbReference type="Pfam" id="PF02780">
    <property type="entry name" value="Transketolase_C"/>
    <property type="match status" value="1"/>
</dbReference>
<dbReference type="SMART" id="SM00861">
    <property type="entry name" value="Transket_pyr"/>
    <property type="match status" value="1"/>
</dbReference>
<dbReference type="SUPFAM" id="SSF52518">
    <property type="entry name" value="Thiamin diphosphate-binding fold (THDP-binding)"/>
    <property type="match status" value="1"/>
</dbReference>
<dbReference type="SUPFAM" id="SSF52922">
    <property type="entry name" value="TK C-terminal domain-like"/>
    <property type="match status" value="1"/>
</dbReference>
<dbReference type="PROSITE" id="PS00802">
    <property type="entry name" value="TRANSKETOLASE_2"/>
    <property type="match status" value="1"/>
</dbReference>
<keyword id="KW-0414">Isoprene biosynthesis</keyword>
<keyword id="KW-0460">Magnesium</keyword>
<keyword id="KW-0479">Metal-binding</keyword>
<keyword id="KW-1185">Reference proteome</keyword>
<keyword id="KW-0784">Thiamine biosynthesis</keyword>
<keyword id="KW-0786">Thiamine pyrophosphate</keyword>
<keyword id="KW-0808">Transferase</keyword>
<evidence type="ECO:0000255" key="1">
    <source>
        <dbReference type="HAMAP-Rule" id="MF_00315"/>
    </source>
</evidence>
<feature type="chain" id="PRO_1000079089" description="1-deoxy-D-xylulose-5-phosphate synthase">
    <location>
        <begin position="1"/>
        <end position="625"/>
    </location>
</feature>
<feature type="binding site" evidence="1">
    <location>
        <position position="74"/>
    </location>
    <ligand>
        <name>thiamine diphosphate</name>
        <dbReference type="ChEBI" id="CHEBI:58937"/>
    </ligand>
</feature>
<feature type="binding site" evidence="1">
    <location>
        <begin position="115"/>
        <end position="117"/>
    </location>
    <ligand>
        <name>thiamine diphosphate</name>
        <dbReference type="ChEBI" id="CHEBI:58937"/>
    </ligand>
</feature>
<feature type="binding site" evidence="1">
    <location>
        <position position="146"/>
    </location>
    <ligand>
        <name>Mg(2+)</name>
        <dbReference type="ChEBI" id="CHEBI:18420"/>
    </ligand>
</feature>
<feature type="binding site" evidence="1">
    <location>
        <begin position="147"/>
        <end position="148"/>
    </location>
    <ligand>
        <name>thiamine diphosphate</name>
        <dbReference type="ChEBI" id="CHEBI:58937"/>
    </ligand>
</feature>
<feature type="binding site" evidence="1">
    <location>
        <position position="175"/>
    </location>
    <ligand>
        <name>Mg(2+)</name>
        <dbReference type="ChEBI" id="CHEBI:18420"/>
    </ligand>
</feature>
<feature type="binding site" evidence="1">
    <location>
        <position position="175"/>
    </location>
    <ligand>
        <name>thiamine diphosphate</name>
        <dbReference type="ChEBI" id="CHEBI:58937"/>
    </ligand>
</feature>
<feature type="binding site" evidence="1">
    <location>
        <position position="286"/>
    </location>
    <ligand>
        <name>thiamine diphosphate</name>
        <dbReference type="ChEBI" id="CHEBI:58937"/>
    </ligand>
</feature>
<feature type="binding site" evidence="1">
    <location>
        <position position="367"/>
    </location>
    <ligand>
        <name>thiamine diphosphate</name>
        <dbReference type="ChEBI" id="CHEBI:58937"/>
    </ligand>
</feature>
<name>DXS_LACP7</name>
<gene>
    <name evidence="1" type="primary">dxs</name>
    <name type="ordered locus">Cphy_2511</name>
</gene>
<comment type="function">
    <text evidence="1">Catalyzes the acyloin condensation reaction between C atoms 2 and 3 of pyruvate and glyceraldehyde 3-phosphate to yield 1-deoxy-D-xylulose-5-phosphate (DXP).</text>
</comment>
<comment type="catalytic activity">
    <reaction evidence="1">
        <text>D-glyceraldehyde 3-phosphate + pyruvate + H(+) = 1-deoxy-D-xylulose 5-phosphate + CO2</text>
        <dbReference type="Rhea" id="RHEA:12605"/>
        <dbReference type="ChEBI" id="CHEBI:15361"/>
        <dbReference type="ChEBI" id="CHEBI:15378"/>
        <dbReference type="ChEBI" id="CHEBI:16526"/>
        <dbReference type="ChEBI" id="CHEBI:57792"/>
        <dbReference type="ChEBI" id="CHEBI:59776"/>
        <dbReference type="EC" id="2.2.1.7"/>
    </reaction>
</comment>
<comment type="cofactor">
    <cofactor evidence="1">
        <name>Mg(2+)</name>
        <dbReference type="ChEBI" id="CHEBI:18420"/>
    </cofactor>
    <text evidence="1">Binds 1 Mg(2+) ion per subunit.</text>
</comment>
<comment type="cofactor">
    <cofactor evidence="1">
        <name>thiamine diphosphate</name>
        <dbReference type="ChEBI" id="CHEBI:58937"/>
    </cofactor>
    <text evidence="1">Binds 1 thiamine pyrophosphate per subunit.</text>
</comment>
<comment type="pathway">
    <text evidence="1">Metabolic intermediate biosynthesis; 1-deoxy-D-xylulose 5-phosphate biosynthesis; 1-deoxy-D-xylulose 5-phosphate from D-glyceraldehyde 3-phosphate and pyruvate: step 1/1.</text>
</comment>
<comment type="subunit">
    <text evidence="1">Homodimer.</text>
</comment>
<comment type="similarity">
    <text evidence="1">Belongs to the transketolase family. DXPS subfamily.</text>
</comment>
<proteinExistence type="inferred from homology"/>
<protein>
    <recommendedName>
        <fullName evidence="1">1-deoxy-D-xylulose-5-phosphate synthase</fullName>
        <ecNumber evidence="1">2.2.1.7</ecNumber>
    </recommendedName>
    <alternativeName>
        <fullName evidence="1">1-deoxyxylulose-5-phosphate synthase</fullName>
        <shortName evidence="1">DXP synthase</shortName>
        <shortName evidence="1">DXPS</shortName>
    </alternativeName>
</protein>
<reference key="1">
    <citation type="submission" date="2007-11" db="EMBL/GenBank/DDBJ databases">
        <title>Complete genome sequence of Clostridium phytofermentans ISDg.</title>
        <authorList>
            <person name="Leschine S.B."/>
            <person name="Warnick T.A."/>
            <person name="Blanchard J.L."/>
            <person name="Schnell D.J."/>
            <person name="Petit E.L."/>
            <person name="LaTouf W.G."/>
            <person name="Copeland A."/>
            <person name="Lucas S."/>
            <person name="Lapidus A."/>
            <person name="Barry K."/>
            <person name="Glavina del Rio T."/>
            <person name="Dalin E."/>
            <person name="Tice H."/>
            <person name="Pitluck S."/>
            <person name="Kiss H."/>
            <person name="Brettin T."/>
            <person name="Bruce D."/>
            <person name="Detter J.C."/>
            <person name="Han C."/>
            <person name="Kuske C."/>
            <person name="Schmutz J."/>
            <person name="Larimer F."/>
            <person name="Land M."/>
            <person name="Hauser L."/>
            <person name="Kyrpides N."/>
            <person name="Kim E.A."/>
            <person name="Richardson P."/>
        </authorList>
    </citation>
    <scope>NUCLEOTIDE SEQUENCE [LARGE SCALE GENOMIC DNA]</scope>
    <source>
        <strain>ATCC 700394 / DSM 18823 / ISDg</strain>
    </source>
</reference>
<organism>
    <name type="scientific">Lachnoclostridium phytofermentans (strain ATCC 700394 / DSM 18823 / ISDg)</name>
    <name type="common">Clostridium phytofermentans</name>
    <dbReference type="NCBI Taxonomy" id="357809"/>
    <lineage>
        <taxon>Bacteria</taxon>
        <taxon>Bacillati</taxon>
        <taxon>Bacillota</taxon>
        <taxon>Clostridia</taxon>
        <taxon>Lachnospirales</taxon>
        <taxon>Lachnospiraceae</taxon>
    </lineage>
</organism>
<sequence length="625" mass="69069">MPKILDEINQPNDIKKISAKKYTQLAAEIRRFLIANVSKTGGHLASNLGVVELTMALHLFLDFPEDKLVWDVGHQAYVHKLLTGRKNDFKTLRQYEGMSGFPKRKESDCDAFDTGHSSTSLSVAVGLVKARELSEEQRKVVAVIGDGALSGGMAFEALNNAGRLKENMIIVLNDNNMSISENVGGMSNYLGKARTNYRYMDFKGGLETALKKIPKVGDAIVTTLKQSKDSLKHLFIPGMLFEDMGMTYIGPIDGHNINQMLTALKSASRVNGAVLIHTVTKKGKGYEPAEKEPSKYHGVEPFDIKTGKKLKINSEVSYTEVFGKKLIELAKVRNDVVAITAAMPDGTGLTAFGDVFPNRFFDVGIAEEHAVTFAAGLAAAGFKPVVAVYSTFLQRAYDQILHDVCVGKLPVVFALDRAGIVGNDGETHQGMFDLSYLSHMPGLTVIAPKNSWEFERMLEYCIDFDGPIAIRYPKNTAYLGLEDHKKEIIYGKGELIASEEEIALIAIGSMVETAVLVREHLHKLGLKATLVNARFISPLDEEMLHQLTKSHTLFVTMEENVKRGGFGEEVSVFLCEHDYQGIKHLNISIPNMFVEHGDRTLLKEKLGLDAESIVDKICRQRGMQK</sequence>